<sequence length="116" mass="13332">MAFDAIPKDLRGLRACLVCSLVKSFDQFETDGCENCEEFLRMKNNKDNVYDHTSNNFDGIIALTTPTDSWVAKWQRLSRFTRGIYAISVSGTLPQSTLRDMKNRGIVYKSRDRSQR</sequence>
<name>SPT4H_DROME</name>
<keyword id="KW-0010">Activator</keyword>
<keyword id="KW-0479">Metal-binding</keyword>
<keyword id="KW-0539">Nucleus</keyword>
<keyword id="KW-1185">Reference proteome</keyword>
<keyword id="KW-0678">Repressor</keyword>
<keyword id="KW-0804">Transcription</keyword>
<keyword id="KW-0805">Transcription regulation</keyword>
<keyword id="KW-0862">Zinc</keyword>
<keyword id="KW-0863">Zinc-finger</keyword>
<protein>
    <recommendedName>
        <fullName>Transcription elongation factor SPT4</fullName>
    </recommendedName>
    <alternativeName>
        <fullName>DRB sensitivity-inducing factor small subunit</fullName>
        <shortName>DSIF small subunit</shortName>
    </alternativeName>
    <alternativeName>
        <fullName>dSpt4</fullName>
    </alternativeName>
</protein>
<evidence type="ECO:0000250" key="1"/>
<evidence type="ECO:0000255" key="2"/>
<evidence type="ECO:0000269" key="3">
    <source>
    </source>
</evidence>
<evidence type="ECO:0000305" key="4"/>
<feature type="chain" id="PRO_0000210332" description="Transcription elongation factor SPT4">
    <location>
        <begin position="1"/>
        <end position="116"/>
    </location>
</feature>
<feature type="zinc finger region" description="C4-type" evidence="2">
    <location>
        <begin position="16"/>
        <end position="36"/>
    </location>
</feature>
<feature type="region of interest" description="Interaction with Spt5" evidence="1">
    <location>
        <begin position="1"/>
        <end position="40"/>
    </location>
</feature>
<comment type="function">
    <text evidence="1">Component of the DRB sensitivity-inducing factor complex (DSIF complex), which regulates transcription elongation by RNA polymerase II. DSIF enhances transcriptional pausing at sites proximal to the promoter, which may facilitate the assembly of an elongation competent RNA polymerase II complex. DSIF may also promote transcriptional elongation within coding regions. DSIF is required for the transcriptional induction of heat shock response genes and regulation of genes which control anterior-posterior patterning during embryonic development (By similarity).</text>
</comment>
<comment type="subunit">
    <text evidence="3">Interacts with Spt5 to form DSIF. DSIF interacts with TRX, RNA polymerase II and with the FACT complex, which is composed of DRE4/SPT16 and SSRP/SSRP1. DSIF can also interact with the exosome, a complex with 3'-5' exoribonuclease activity which is composed of at least Csl4, Dis3, Mtr3, Rrp4, Rrp6, Rrp40, Rrp42, Rrp46 and Ski6. DSIF may also interact with the positive transcription elongation factor b complex (P-TEFb complex), which is composed of Cdk9 and cyclin-T (CycT).</text>
</comment>
<comment type="interaction">
    <interactant intactId="EBI-165626">
        <id>Q9TVQ5</id>
    </interactant>
    <interactant intactId="EBI-134850">
        <id>Q9V460</id>
        <label>Spt5</label>
    </interactant>
    <organismsDiffer>false</organismsDiffer>
    <experiments>3</experiments>
</comment>
<comment type="subcellular location">
    <subcellularLocation>
        <location evidence="1">Nucleus</location>
    </subcellularLocation>
</comment>
<comment type="similarity">
    <text evidence="4">Belongs to the SPT4 family.</text>
</comment>
<gene>
    <name type="primary">spt4</name>
    <name type="ORF">CG12372</name>
</gene>
<accession>Q9TVQ5</accession>
<accession>Q9V6E5</accession>
<dbReference type="EMBL" id="AF108353">
    <property type="protein sequence ID" value="AAF14223.1"/>
    <property type="molecule type" value="mRNA"/>
</dbReference>
<dbReference type="EMBL" id="AF109133">
    <property type="protein sequence ID" value="AAF14224.1"/>
    <property type="molecule type" value="Genomic_DNA"/>
</dbReference>
<dbReference type="EMBL" id="AE013599">
    <property type="protein sequence ID" value="AAF58482.2"/>
    <property type="molecule type" value="Genomic_DNA"/>
</dbReference>
<dbReference type="EMBL" id="AY075424">
    <property type="protein sequence ID" value="AAL68240.1"/>
    <property type="molecule type" value="mRNA"/>
</dbReference>
<dbReference type="RefSeq" id="NP_610802.1">
    <property type="nucleotide sequence ID" value="NM_136958.5"/>
</dbReference>
<dbReference type="SMR" id="Q9TVQ5"/>
<dbReference type="BioGRID" id="62161">
    <property type="interactions" value="4"/>
</dbReference>
<dbReference type="ComplexPortal" id="CPX-2429">
    <property type="entry name" value="DSIF transcription elongation complex"/>
</dbReference>
<dbReference type="FunCoup" id="Q9TVQ5">
    <property type="interactions" value="1457"/>
</dbReference>
<dbReference type="IntAct" id="Q9TVQ5">
    <property type="interactions" value="2"/>
</dbReference>
<dbReference type="STRING" id="7227.FBpp0086953"/>
<dbReference type="PaxDb" id="7227-FBpp0086953"/>
<dbReference type="DNASU" id="36387"/>
<dbReference type="EnsemblMetazoa" id="FBtr0087840">
    <property type="protein sequence ID" value="FBpp0086953"/>
    <property type="gene ID" value="FBgn0028683"/>
</dbReference>
<dbReference type="GeneID" id="36387"/>
<dbReference type="KEGG" id="dme:Dmel_CG12372"/>
<dbReference type="UCSC" id="CG12372-RA">
    <property type="organism name" value="d. melanogaster"/>
</dbReference>
<dbReference type="AGR" id="FB:FBgn0028683"/>
<dbReference type="CTD" id="36387"/>
<dbReference type="FlyBase" id="FBgn0028683">
    <property type="gene designation" value="spt4"/>
</dbReference>
<dbReference type="VEuPathDB" id="VectorBase:FBgn0028683"/>
<dbReference type="eggNOG" id="KOG3490">
    <property type="taxonomic scope" value="Eukaryota"/>
</dbReference>
<dbReference type="GeneTree" id="ENSGT00390000018559"/>
<dbReference type="HOGENOM" id="CLU_138052_3_0_1"/>
<dbReference type="InParanoid" id="Q9TVQ5"/>
<dbReference type="OMA" id="FDGMIAV"/>
<dbReference type="OrthoDB" id="248751at2759"/>
<dbReference type="PhylomeDB" id="Q9TVQ5"/>
<dbReference type="Reactome" id="R-DME-112382">
    <property type="pathway name" value="Formation of RNA Pol II elongation complex"/>
</dbReference>
<dbReference type="Reactome" id="R-DME-113418">
    <property type="pathway name" value="Formation of the Early Elongation Complex"/>
</dbReference>
<dbReference type="Reactome" id="R-DME-674695">
    <property type="pathway name" value="RNA Polymerase II Pre-transcription Events"/>
</dbReference>
<dbReference type="Reactome" id="R-DME-6796648">
    <property type="pathway name" value="TP53 Regulates Transcription of DNA Repair Genes"/>
</dbReference>
<dbReference type="Reactome" id="R-DME-6807505">
    <property type="pathway name" value="RNA polymerase II transcribes snRNA genes"/>
</dbReference>
<dbReference type="Reactome" id="R-DME-75955">
    <property type="pathway name" value="RNA Polymerase II Transcription Elongation"/>
</dbReference>
<dbReference type="BioGRID-ORCS" id="36387">
    <property type="hits" value="1 hit in 1 CRISPR screen"/>
</dbReference>
<dbReference type="GenomeRNAi" id="36387"/>
<dbReference type="PRO" id="PR:Q9TVQ5"/>
<dbReference type="Proteomes" id="UP000000803">
    <property type="component" value="Chromosome 2R"/>
</dbReference>
<dbReference type="Bgee" id="FBgn0028683">
    <property type="expression patterns" value="Expressed in ovary and 90 other cell types or tissues"/>
</dbReference>
<dbReference type="ExpressionAtlas" id="Q9TVQ5">
    <property type="expression patterns" value="baseline and differential"/>
</dbReference>
<dbReference type="GO" id="GO:0032044">
    <property type="term" value="C:DSIF complex"/>
    <property type="evidence" value="ECO:0000314"/>
    <property type="project" value="FlyBase"/>
</dbReference>
<dbReference type="GO" id="GO:0005634">
    <property type="term" value="C:nucleus"/>
    <property type="evidence" value="ECO:0000314"/>
    <property type="project" value="FlyBase"/>
</dbReference>
<dbReference type="GO" id="GO:0005705">
    <property type="term" value="C:polytene chromosome interband"/>
    <property type="evidence" value="ECO:0000314"/>
    <property type="project" value="UniProtKB"/>
</dbReference>
<dbReference type="GO" id="GO:0005703">
    <property type="term" value="C:polytene chromosome puff"/>
    <property type="evidence" value="ECO:0000314"/>
    <property type="project" value="UniProtKB"/>
</dbReference>
<dbReference type="GO" id="GO:0008023">
    <property type="term" value="C:transcription elongation factor complex"/>
    <property type="evidence" value="ECO:0000314"/>
    <property type="project" value="FlyBase"/>
</dbReference>
<dbReference type="GO" id="GO:0046982">
    <property type="term" value="F:protein heterodimerization activity"/>
    <property type="evidence" value="ECO:0000250"/>
    <property type="project" value="UniProtKB"/>
</dbReference>
<dbReference type="GO" id="GO:0008270">
    <property type="term" value="F:zinc ion binding"/>
    <property type="evidence" value="ECO:0007669"/>
    <property type="project" value="UniProtKB-KW"/>
</dbReference>
<dbReference type="GO" id="GO:0032785">
    <property type="term" value="P:negative regulation of DNA-templated transcription, elongation"/>
    <property type="evidence" value="ECO:0000314"/>
    <property type="project" value="UniProtKB"/>
</dbReference>
<dbReference type="GO" id="GO:0000122">
    <property type="term" value="P:negative regulation of transcription by RNA polymerase II"/>
    <property type="evidence" value="ECO:0000314"/>
    <property type="project" value="UniProtKB"/>
</dbReference>
<dbReference type="GO" id="GO:0032786">
    <property type="term" value="P:positive regulation of DNA-templated transcription, elongation"/>
    <property type="evidence" value="ECO:0000250"/>
    <property type="project" value="UniProtKB"/>
</dbReference>
<dbReference type="GO" id="GO:0045944">
    <property type="term" value="P:positive regulation of transcription by RNA polymerase II"/>
    <property type="evidence" value="ECO:0000250"/>
    <property type="project" value="UniProtKB"/>
</dbReference>
<dbReference type="GO" id="GO:0006368">
    <property type="term" value="P:transcription elongation by RNA polymerase II"/>
    <property type="evidence" value="ECO:0000314"/>
    <property type="project" value="UniProtKB"/>
</dbReference>
<dbReference type="GO" id="GO:0140673">
    <property type="term" value="P:transcription elongation-coupled chromatin remodeling"/>
    <property type="evidence" value="ECO:0007669"/>
    <property type="project" value="InterPro"/>
</dbReference>
<dbReference type="CDD" id="cd07973">
    <property type="entry name" value="Spt4"/>
    <property type="match status" value="1"/>
</dbReference>
<dbReference type="FunFam" id="3.30.40.210:FF:000001">
    <property type="entry name" value="Transcription elongation factor SPT4"/>
    <property type="match status" value="1"/>
</dbReference>
<dbReference type="Gene3D" id="3.30.40.210">
    <property type="match status" value="1"/>
</dbReference>
<dbReference type="InterPro" id="IPR029040">
    <property type="entry name" value="RPABC4/Spt4"/>
</dbReference>
<dbReference type="InterPro" id="IPR009287">
    <property type="entry name" value="Spt4"/>
</dbReference>
<dbReference type="InterPro" id="IPR022800">
    <property type="entry name" value="Spt4/RpoE2_Znf"/>
</dbReference>
<dbReference type="InterPro" id="IPR038510">
    <property type="entry name" value="Spt4_sf"/>
</dbReference>
<dbReference type="PANTHER" id="PTHR12882">
    <property type="entry name" value="SUPPRESSOR OF TY 4"/>
    <property type="match status" value="1"/>
</dbReference>
<dbReference type="PANTHER" id="PTHR12882:SF1">
    <property type="entry name" value="TRANSCRIPTION ELONGATION FACTOR SPT4"/>
    <property type="match status" value="1"/>
</dbReference>
<dbReference type="Pfam" id="PF06093">
    <property type="entry name" value="Spt4"/>
    <property type="match status" value="1"/>
</dbReference>
<dbReference type="PIRSF" id="PIRSF025023">
    <property type="entry name" value="Spt4"/>
    <property type="match status" value="1"/>
</dbReference>
<dbReference type="SMART" id="SM01389">
    <property type="entry name" value="Spt4"/>
    <property type="match status" value="1"/>
</dbReference>
<dbReference type="SUPFAM" id="SSF63393">
    <property type="entry name" value="RNA polymerase subunits"/>
    <property type="match status" value="1"/>
</dbReference>
<reference key="1">
    <citation type="submission" date="1998-11" db="EMBL/GenBank/DDBJ databases">
        <title>Characterization of Drosophila homolog of SPT4.</title>
        <authorList>
            <person name="Chiang P.-W."/>
        </authorList>
    </citation>
    <scope>NUCLEOTIDE SEQUENCE [GENOMIC DNA / MRNA]</scope>
</reference>
<reference key="2">
    <citation type="journal article" date="2000" name="Science">
        <title>The genome sequence of Drosophila melanogaster.</title>
        <authorList>
            <person name="Adams M.D."/>
            <person name="Celniker S.E."/>
            <person name="Holt R.A."/>
            <person name="Evans C.A."/>
            <person name="Gocayne J.D."/>
            <person name="Amanatides P.G."/>
            <person name="Scherer S.E."/>
            <person name="Li P.W."/>
            <person name="Hoskins R.A."/>
            <person name="Galle R.F."/>
            <person name="George R.A."/>
            <person name="Lewis S.E."/>
            <person name="Richards S."/>
            <person name="Ashburner M."/>
            <person name="Henderson S.N."/>
            <person name="Sutton G.G."/>
            <person name="Wortman J.R."/>
            <person name="Yandell M.D."/>
            <person name="Zhang Q."/>
            <person name="Chen L.X."/>
            <person name="Brandon R.C."/>
            <person name="Rogers Y.-H.C."/>
            <person name="Blazej R.G."/>
            <person name="Champe M."/>
            <person name="Pfeiffer B.D."/>
            <person name="Wan K.H."/>
            <person name="Doyle C."/>
            <person name="Baxter E.G."/>
            <person name="Helt G."/>
            <person name="Nelson C.R."/>
            <person name="Miklos G.L.G."/>
            <person name="Abril J.F."/>
            <person name="Agbayani A."/>
            <person name="An H.-J."/>
            <person name="Andrews-Pfannkoch C."/>
            <person name="Baldwin D."/>
            <person name="Ballew R.M."/>
            <person name="Basu A."/>
            <person name="Baxendale J."/>
            <person name="Bayraktaroglu L."/>
            <person name="Beasley E.M."/>
            <person name="Beeson K.Y."/>
            <person name="Benos P.V."/>
            <person name="Berman B.P."/>
            <person name="Bhandari D."/>
            <person name="Bolshakov S."/>
            <person name="Borkova D."/>
            <person name="Botchan M.R."/>
            <person name="Bouck J."/>
            <person name="Brokstein P."/>
            <person name="Brottier P."/>
            <person name="Burtis K.C."/>
            <person name="Busam D.A."/>
            <person name="Butler H."/>
            <person name="Cadieu E."/>
            <person name="Center A."/>
            <person name="Chandra I."/>
            <person name="Cherry J.M."/>
            <person name="Cawley S."/>
            <person name="Dahlke C."/>
            <person name="Davenport L.B."/>
            <person name="Davies P."/>
            <person name="de Pablos B."/>
            <person name="Delcher A."/>
            <person name="Deng Z."/>
            <person name="Mays A.D."/>
            <person name="Dew I."/>
            <person name="Dietz S.M."/>
            <person name="Dodson K."/>
            <person name="Doup L.E."/>
            <person name="Downes M."/>
            <person name="Dugan-Rocha S."/>
            <person name="Dunkov B.C."/>
            <person name="Dunn P."/>
            <person name="Durbin K.J."/>
            <person name="Evangelista C.C."/>
            <person name="Ferraz C."/>
            <person name="Ferriera S."/>
            <person name="Fleischmann W."/>
            <person name="Fosler C."/>
            <person name="Gabrielian A.E."/>
            <person name="Garg N.S."/>
            <person name="Gelbart W.M."/>
            <person name="Glasser K."/>
            <person name="Glodek A."/>
            <person name="Gong F."/>
            <person name="Gorrell J.H."/>
            <person name="Gu Z."/>
            <person name="Guan P."/>
            <person name="Harris M."/>
            <person name="Harris N.L."/>
            <person name="Harvey D.A."/>
            <person name="Heiman T.J."/>
            <person name="Hernandez J.R."/>
            <person name="Houck J."/>
            <person name="Hostin D."/>
            <person name="Houston K.A."/>
            <person name="Howland T.J."/>
            <person name="Wei M.-H."/>
            <person name="Ibegwam C."/>
            <person name="Jalali M."/>
            <person name="Kalush F."/>
            <person name="Karpen G.H."/>
            <person name="Ke Z."/>
            <person name="Kennison J.A."/>
            <person name="Ketchum K.A."/>
            <person name="Kimmel B.E."/>
            <person name="Kodira C.D."/>
            <person name="Kraft C.L."/>
            <person name="Kravitz S."/>
            <person name="Kulp D."/>
            <person name="Lai Z."/>
            <person name="Lasko P."/>
            <person name="Lei Y."/>
            <person name="Levitsky A.A."/>
            <person name="Li J.H."/>
            <person name="Li Z."/>
            <person name="Liang Y."/>
            <person name="Lin X."/>
            <person name="Liu X."/>
            <person name="Mattei B."/>
            <person name="McIntosh T.C."/>
            <person name="McLeod M.P."/>
            <person name="McPherson D."/>
            <person name="Merkulov G."/>
            <person name="Milshina N.V."/>
            <person name="Mobarry C."/>
            <person name="Morris J."/>
            <person name="Moshrefi A."/>
            <person name="Mount S.M."/>
            <person name="Moy M."/>
            <person name="Murphy B."/>
            <person name="Murphy L."/>
            <person name="Muzny D.M."/>
            <person name="Nelson D.L."/>
            <person name="Nelson D.R."/>
            <person name="Nelson K.A."/>
            <person name="Nixon K."/>
            <person name="Nusskern D.R."/>
            <person name="Pacleb J.M."/>
            <person name="Palazzolo M."/>
            <person name="Pittman G.S."/>
            <person name="Pan S."/>
            <person name="Pollard J."/>
            <person name="Puri V."/>
            <person name="Reese M.G."/>
            <person name="Reinert K."/>
            <person name="Remington K."/>
            <person name="Saunders R.D.C."/>
            <person name="Scheeler F."/>
            <person name="Shen H."/>
            <person name="Shue B.C."/>
            <person name="Siden-Kiamos I."/>
            <person name="Simpson M."/>
            <person name="Skupski M.P."/>
            <person name="Smith T.J."/>
            <person name="Spier E."/>
            <person name="Spradling A.C."/>
            <person name="Stapleton M."/>
            <person name="Strong R."/>
            <person name="Sun E."/>
            <person name="Svirskas R."/>
            <person name="Tector C."/>
            <person name="Turner R."/>
            <person name="Venter E."/>
            <person name="Wang A.H."/>
            <person name="Wang X."/>
            <person name="Wang Z.-Y."/>
            <person name="Wassarman D.A."/>
            <person name="Weinstock G.M."/>
            <person name="Weissenbach J."/>
            <person name="Williams S.M."/>
            <person name="Woodage T."/>
            <person name="Worley K.C."/>
            <person name="Wu D."/>
            <person name="Yang S."/>
            <person name="Yao Q.A."/>
            <person name="Ye J."/>
            <person name="Yeh R.-F."/>
            <person name="Zaveri J.S."/>
            <person name="Zhan M."/>
            <person name="Zhang G."/>
            <person name="Zhao Q."/>
            <person name="Zheng L."/>
            <person name="Zheng X.H."/>
            <person name="Zhong F.N."/>
            <person name="Zhong W."/>
            <person name="Zhou X."/>
            <person name="Zhu S.C."/>
            <person name="Zhu X."/>
            <person name="Smith H.O."/>
            <person name="Gibbs R.A."/>
            <person name="Myers E.W."/>
            <person name="Rubin G.M."/>
            <person name="Venter J.C."/>
        </authorList>
    </citation>
    <scope>NUCLEOTIDE SEQUENCE [LARGE SCALE GENOMIC DNA]</scope>
    <source>
        <strain>Berkeley</strain>
    </source>
</reference>
<reference key="3">
    <citation type="journal article" date="2002" name="Genome Biol.">
        <title>Annotation of the Drosophila melanogaster euchromatic genome: a systematic review.</title>
        <authorList>
            <person name="Misra S."/>
            <person name="Crosby M.A."/>
            <person name="Mungall C.J."/>
            <person name="Matthews B.B."/>
            <person name="Campbell K.S."/>
            <person name="Hradecky P."/>
            <person name="Huang Y."/>
            <person name="Kaminker J.S."/>
            <person name="Millburn G.H."/>
            <person name="Prochnik S.E."/>
            <person name="Smith C.D."/>
            <person name="Tupy J.L."/>
            <person name="Whitfield E.J."/>
            <person name="Bayraktaroglu L."/>
            <person name="Berman B.P."/>
            <person name="Bettencourt B.R."/>
            <person name="Celniker S.E."/>
            <person name="de Grey A.D.N.J."/>
            <person name="Drysdale R.A."/>
            <person name="Harris N.L."/>
            <person name="Richter J."/>
            <person name="Russo S."/>
            <person name="Schroeder A.J."/>
            <person name="Shu S.Q."/>
            <person name="Stapleton M."/>
            <person name="Yamada C."/>
            <person name="Ashburner M."/>
            <person name="Gelbart W.M."/>
            <person name="Rubin G.M."/>
            <person name="Lewis S.E."/>
        </authorList>
    </citation>
    <scope>GENOME REANNOTATION</scope>
    <source>
        <strain>Berkeley</strain>
    </source>
</reference>
<reference key="4">
    <citation type="journal article" date="2002" name="Genome Biol.">
        <title>A Drosophila full-length cDNA resource.</title>
        <authorList>
            <person name="Stapleton M."/>
            <person name="Carlson J.W."/>
            <person name="Brokstein P."/>
            <person name="Yu C."/>
            <person name="Champe M."/>
            <person name="George R.A."/>
            <person name="Guarin H."/>
            <person name="Kronmiller B."/>
            <person name="Pacleb J.M."/>
            <person name="Park S."/>
            <person name="Wan K.H."/>
            <person name="Rubin G.M."/>
            <person name="Celniker S.E."/>
        </authorList>
    </citation>
    <scope>NUCLEOTIDE SEQUENCE [LARGE SCALE MRNA]</scope>
    <source>
        <strain>Berkeley</strain>
        <tissue>Embryo</tissue>
    </source>
</reference>
<reference key="5">
    <citation type="journal article" date="2004" name="J. Biol. Chem.">
        <title>Analysis of polymerase II elongation complexes by native gel electrophoresis. Evidence for a novel carboxyl-terminal domain-mediated termination mechanism.</title>
        <authorList>
            <person name="Zhang Z."/>
            <person name="Wu C.-H."/>
            <person name="Gilmour D.S."/>
        </authorList>
    </citation>
    <scope>INTERACTION WITH SPT5 AND RNA POLYMERASE II</scope>
</reference>
<organism>
    <name type="scientific">Drosophila melanogaster</name>
    <name type="common">Fruit fly</name>
    <dbReference type="NCBI Taxonomy" id="7227"/>
    <lineage>
        <taxon>Eukaryota</taxon>
        <taxon>Metazoa</taxon>
        <taxon>Ecdysozoa</taxon>
        <taxon>Arthropoda</taxon>
        <taxon>Hexapoda</taxon>
        <taxon>Insecta</taxon>
        <taxon>Pterygota</taxon>
        <taxon>Neoptera</taxon>
        <taxon>Endopterygota</taxon>
        <taxon>Diptera</taxon>
        <taxon>Brachycera</taxon>
        <taxon>Muscomorpha</taxon>
        <taxon>Ephydroidea</taxon>
        <taxon>Drosophilidae</taxon>
        <taxon>Drosophila</taxon>
        <taxon>Sophophora</taxon>
    </lineage>
</organism>
<proteinExistence type="evidence at protein level"/>